<gene>
    <name type="ordered locus">c0942</name>
</gene>
<name>ENDPH_ECOL6</name>
<protein>
    <recommendedName>
        <fullName>Probable replication endonuclease from prophage-like region</fullName>
        <ecNumber>3.1.-.-</ecNumber>
    </recommendedName>
</protein>
<evidence type="ECO:0000250" key="1"/>
<evidence type="ECO:0000305" key="2"/>
<keyword id="KW-0235">DNA replication</keyword>
<keyword id="KW-0255">Endonuclease</keyword>
<keyword id="KW-0378">Hydrolase</keyword>
<keyword id="KW-0540">Nuclease</keyword>
<keyword id="KW-1185">Reference proteome</keyword>
<dbReference type="EC" id="3.1.-.-"/>
<dbReference type="EMBL" id="AE014075">
    <property type="protein sequence ID" value="AAN79415.1"/>
    <property type="molecule type" value="Genomic_DNA"/>
</dbReference>
<dbReference type="RefSeq" id="WP_000017614.1">
    <property type="nucleotide sequence ID" value="NZ_CP051263.1"/>
</dbReference>
<dbReference type="STRING" id="199310.c0942"/>
<dbReference type="KEGG" id="ecc:c0942"/>
<dbReference type="eggNOG" id="ENOG502Z7TX">
    <property type="taxonomic scope" value="Bacteria"/>
</dbReference>
<dbReference type="HOGENOM" id="CLU_013772_2_0_6"/>
<dbReference type="BioCyc" id="ECOL199310:C0942-MONOMER"/>
<dbReference type="Proteomes" id="UP000001410">
    <property type="component" value="Chromosome"/>
</dbReference>
<dbReference type="GO" id="GO:0004519">
    <property type="term" value="F:endonuclease activity"/>
    <property type="evidence" value="ECO:0007669"/>
    <property type="project" value="UniProtKB-KW"/>
</dbReference>
<dbReference type="GO" id="GO:0006260">
    <property type="term" value="P:DNA replication"/>
    <property type="evidence" value="ECO:0007669"/>
    <property type="project" value="UniProtKB-KW"/>
</dbReference>
<dbReference type="InterPro" id="IPR008766">
    <property type="entry name" value="Replication_gene_A-like"/>
</dbReference>
<dbReference type="Pfam" id="PF05840">
    <property type="entry name" value="Phage_GPA"/>
    <property type="match status" value="1"/>
</dbReference>
<organism>
    <name type="scientific">Escherichia coli O6:H1 (strain CFT073 / ATCC 700928 / UPEC)</name>
    <dbReference type="NCBI Taxonomy" id="199310"/>
    <lineage>
        <taxon>Bacteria</taxon>
        <taxon>Pseudomonadati</taxon>
        <taxon>Pseudomonadota</taxon>
        <taxon>Gammaproteobacteria</taxon>
        <taxon>Enterobacterales</taxon>
        <taxon>Enterobacteriaceae</taxon>
        <taxon>Escherichia</taxon>
    </lineage>
</organism>
<feature type="chain" id="PRO_0000278164" description="Probable replication endonuclease from prophage-like region">
    <location>
        <begin position="1"/>
        <end position="804"/>
    </location>
</feature>
<feature type="active site" description="O-(5'-phospho-DNA)-tyrosine intermediate" evidence="1">
    <location>
        <position position="498"/>
    </location>
</feature>
<feature type="active site" description="O-(5'-phospho-DNA)-tyrosine intermediate" evidence="1">
    <location>
        <position position="502"/>
    </location>
</feature>
<proteinExistence type="inferred from homology"/>
<comment type="function">
    <text evidence="2">Possible endonuclease which induces a single-strand cut and initiates DNA replication.</text>
</comment>
<comment type="similarity">
    <text evidence="2">Belongs to the phage GPA family.</text>
</comment>
<sequence>MSHDDMSNSSGFNEAAASFSWNGPKKAINPYLDPAEVAPESALSNLITLYAADNEQEQLRREALSEQVWERYFFNESRDPVQREMEQDKLISRAKLAHEQQRFNPDMVILADVNAQPSHISKPLMQRIEYFSSLGRPKAYSRYLRETIKPCLERLEHIRDSQLSTSFRFMASHEGLDGLLILPEMSQEQVKRLSTLVAAHMSMCLDAACGDLYATDDVKPEEIRKTWERVAAETLRLDVIPPAFEQLRRKRNRRKPVPYELIPGSLARMLCADWWYRKLWKMRCEWREEQLRAVCLVSKKASPYVSYEAVMHKREQRRKSLEFFRSHELVNEDGDTLDMEDVVNASSSNPAHRRNEMMACVKGLELIAEMRGDCAVFYTITCPSRFHSTLNNGRPNPTWTNATVRQSSDYLVGMFAAFRKAMHKAGLRWYGVRVAEPHHDGTVHWHLLCFMRKKDRRAITALLCKFAIREDREELGNNTGPRFKSELINPRKGTPTSYIAKYISKNIDGRGLAGEISKETGKSLRDNAEYVNAWASLHRVQQFRFFGIPGRQAYRELRLLAGQAARQQGDKKAGAPVLDNPRLDAILAAADAGCFATYIMKQGGVLVPRKYHLIRTAYEINEEPTAYGDHGIRIYGIWSPIAEGKICTHAVKWKMVRKAVDVQEAVADQGACAPWTRGNNCPLAENLNQQAKDKSADGDTRTDITRMDDKELHDYLHSMSKKERRELAARLRLVKPKRRKDYKQRITDHQRQQLVYELKSRGFDGSEKEVDLLLRGGSIPSGAGLRIFYRNQRLQEDDKWRNLY</sequence>
<accession>Q8FJJ0</accession>
<reference key="1">
    <citation type="journal article" date="2002" name="Proc. Natl. Acad. Sci. U.S.A.">
        <title>Extensive mosaic structure revealed by the complete genome sequence of uropathogenic Escherichia coli.</title>
        <authorList>
            <person name="Welch R.A."/>
            <person name="Burland V."/>
            <person name="Plunkett G. III"/>
            <person name="Redford P."/>
            <person name="Roesch P."/>
            <person name="Rasko D."/>
            <person name="Buckles E.L."/>
            <person name="Liou S.-R."/>
            <person name="Boutin A."/>
            <person name="Hackett J."/>
            <person name="Stroud D."/>
            <person name="Mayhew G.F."/>
            <person name="Rose D.J."/>
            <person name="Zhou S."/>
            <person name="Schwartz D.C."/>
            <person name="Perna N.T."/>
            <person name="Mobley H.L.T."/>
            <person name="Donnenberg M.S."/>
            <person name="Blattner F.R."/>
        </authorList>
    </citation>
    <scope>NUCLEOTIDE SEQUENCE [LARGE SCALE GENOMIC DNA]</scope>
    <source>
        <strain>CFT073 / ATCC 700928 / UPEC</strain>
    </source>
</reference>